<sequence>MSDSQTLVVKLGTSVLTGGSRRLNRAHIVELVRQCAQLHAAGHRIVIVTSGAIAAGREHLGYPELPATIASKQLLAAVGQSRLIQLWEQLFSIYGIHVGQMLLTRADMEDRERFLNARDTLRALLDNNIVPVINENDAVATAEIKVGDNDNLSALAAILAGADKLLLLTDQKGLYTADPRSNPQAELIKDVYGIDDALRAIAGDSVSGLGTGGMSTKLQAADVACRAGIDTIIAAGSKPGVIGDVMEGISVGTLFHAQATPLENRKRWIFGAPPAGEITVDEGATAAILERGSSLLPKGIKSVTGNFSRGEVIRICNLEGRDIAHGVSRYNSDALRRIAGHHSQEIDAILGYEYGPVAVHRDDMITR</sequence>
<proteinExistence type="inferred from homology"/>
<keyword id="KW-0028">Amino-acid biosynthesis</keyword>
<keyword id="KW-0067">ATP-binding</keyword>
<keyword id="KW-0963">Cytoplasm</keyword>
<keyword id="KW-0418">Kinase</keyword>
<keyword id="KW-0547">Nucleotide-binding</keyword>
<keyword id="KW-0641">Proline biosynthesis</keyword>
<keyword id="KW-1185">Reference proteome</keyword>
<keyword id="KW-0808">Transferase</keyword>
<comment type="function">
    <text evidence="1">Catalyzes the transfer of a phosphate group to glutamate to form L-glutamate 5-phosphate.</text>
</comment>
<comment type="catalytic activity">
    <reaction evidence="1">
        <text>L-glutamate + ATP = L-glutamyl 5-phosphate + ADP</text>
        <dbReference type="Rhea" id="RHEA:14877"/>
        <dbReference type="ChEBI" id="CHEBI:29985"/>
        <dbReference type="ChEBI" id="CHEBI:30616"/>
        <dbReference type="ChEBI" id="CHEBI:58274"/>
        <dbReference type="ChEBI" id="CHEBI:456216"/>
        <dbReference type="EC" id="2.7.2.11"/>
    </reaction>
</comment>
<comment type="pathway">
    <text evidence="1">Amino-acid biosynthesis; L-proline biosynthesis; L-glutamate 5-semialdehyde from L-glutamate: step 1/2.</text>
</comment>
<comment type="subcellular location">
    <subcellularLocation>
        <location evidence="1">Cytoplasm</location>
    </subcellularLocation>
</comment>
<comment type="similarity">
    <text evidence="1">Belongs to the glutamate 5-kinase family.</text>
</comment>
<evidence type="ECO:0000255" key="1">
    <source>
        <dbReference type="HAMAP-Rule" id="MF_00456"/>
    </source>
</evidence>
<dbReference type="EC" id="2.7.2.11" evidence="1"/>
<dbReference type="EMBL" id="FM180568">
    <property type="protein sequence ID" value="CAS07783.1"/>
    <property type="molecule type" value="Genomic_DNA"/>
</dbReference>
<dbReference type="RefSeq" id="WP_001285288.1">
    <property type="nucleotide sequence ID" value="NC_011601.1"/>
</dbReference>
<dbReference type="SMR" id="B7UJD0"/>
<dbReference type="GeneID" id="93777151"/>
<dbReference type="KEGG" id="ecg:E2348C_0235"/>
<dbReference type="HOGENOM" id="CLU_025400_2_0_6"/>
<dbReference type="UniPathway" id="UPA00098">
    <property type="reaction ID" value="UER00359"/>
</dbReference>
<dbReference type="Proteomes" id="UP000008205">
    <property type="component" value="Chromosome"/>
</dbReference>
<dbReference type="GO" id="GO:0005829">
    <property type="term" value="C:cytosol"/>
    <property type="evidence" value="ECO:0007669"/>
    <property type="project" value="TreeGrafter"/>
</dbReference>
<dbReference type="GO" id="GO:0005524">
    <property type="term" value="F:ATP binding"/>
    <property type="evidence" value="ECO:0007669"/>
    <property type="project" value="UniProtKB-KW"/>
</dbReference>
<dbReference type="GO" id="GO:0004349">
    <property type="term" value="F:glutamate 5-kinase activity"/>
    <property type="evidence" value="ECO:0007669"/>
    <property type="project" value="UniProtKB-UniRule"/>
</dbReference>
<dbReference type="GO" id="GO:0003723">
    <property type="term" value="F:RNA binding"/>
    <property type="evidence" value="ECO:0007669"/>
    <property type="project" value="InterPro"/>
</dbReference>
<dbReference type="GO" id="GO:0055129">
    <property type="term" value="P:L-proline biosynthetic process"/>
    <property type="evidence" value="ECO:0007669"/>
    <property type="project" value="UniProtKB-UniRule"/>
</dbReference>
<dbReference type="CDD" id="cd04242">
    <property type="entry name" value="AAK_G5K_ProB"/>
    <property type="match status" value="1"/>
</dbReference>
<dbReference type="CDD" id="cd21157">
    <property type="entry name" value="PUA_G5K"/>
    <property type="match status" value="1"/>
</dbReference>
<dbReference type="FunFam" id="2.30.130.10:FF:000003">
    <property type="entry name" value="Glutamate 5-kinase"/>
    <property type="match status" value="1"/>
</dbReference>
<dbReference type="FunFam" id="3.40.1160.10:FF:000006">
    <property type="entry name" value="Glutamate 5-kinase"/>
    <property type="match status" value="1"/>
</dbReference>
<dbReference type="Gene3D" id="3.40.1160.10">
    <property type="entry name" value="Acetylglutamate kinase-like"/>
    <property type="match status" value="2"/>
</dbReference>
<dbReference type="Gene3D" id="2.30.130.10">
    <property type="entry name" value="PUA domain"/>
    <property type="match status" value="1"/>
</dbReference>
<dbReference type="HAMAP" id="MF_00456">
    <property type="entry name" value="ProB"/>
    <property type="match status" value="1"/>
</dbReference>
<dbReference type="InterPro" id="IPR036393">
    <property type="entry name" value="AceGlu_kinase-like_sf"/>
</dbReference>
<dbReference type="InterPro" id="IPR001048">
    <property type="entry name" value="Asp/Glu/Uridylate_kinase"/>
</dbReference>
<dbReference type="InterPro" id="IPR041739">
    <property type="entry name" value="G5K_ProB"/>
</dbReference>
<dbReference type="InterPro" id="IPR001057">
    <property type="entry name" value="Glu/AcGlu_kinase"/>
</dbReference>
<dbReference type="InterPro" id="IPR011529">
    <property type="entry name" value="Glu_5kinase"/>
</dbReference>
<dbReference type="InterPro" id="IPR005715">
    <property type="entry name" value="Glu_5kinase/COase_Synthase"/>
</dbReference>
<dbReference type="InterPro" id="IPR019797">
    <property type="entry name" value="Glutamate_5-kinase_CS"/>
</dbReference>
<dbReference type="InterPro" id="IPR002478">
    <property type="entry name" value="PUA"/>
</dbReference>
<dbReference type="InterPro" id="IPR015947">
    <property type="entry name" value="PUA-like_sf"/>
</dbReference>
<dbReference type="InterPro" id="IPR036974">
    <property type="entry name" value="PUA_sf"/>
</dbReference>
<dbReference type="NCBIfam" id="TIGR01027">
    <property type="entry name" value="proB"/>
    <property type="match status" value="1"/>
</dbReference>
<dbReference type="PANTHER" id="PTHR43654">
    <property type="entry name" value="GLUTAMATE 5-KINASE"/>
    <property type="match status" value="1"/>
</dbReference>
<dbReference type="PANTHER" id="PTHR43654:SF1">
    <property type="entry name" value="ISOPENTENYL PHOSPHATE KINASE"/>
    <property type="match status" value="1"/>
</dbReference>
<dbReference type="Pfam" id="PF00696">
    <property type="entry name" value="AA_kinase"/>
    <property type="match status" value="1"/>
</dbReference>
<dbReference type="Pfam" id="PF01472">
    <property type="entry name" value="PUA"/>
    <property type="match status" value="1"/>
</dbReference>
<dbReference type="PIRSF" id="PIRSF000729">
    <property type="entry name" value="GK"/>
    <property type="match status" value="1"/>
</dbReference>
<dbReference type="PRINTS" id="PR00474">
    <property type="entry name" value="GLU5KINASE"/>
</dbReference>
<dbReference type="SMART" id="SM00359">
    <property type="entry name" value="PUA"/>
    <property type="match status" value="1"/>
</dbReference>
<dbReference type="SUPFAM" id="SSF53633">
    <property type="entry name" value="Carbamate kinase-like"/>
    <property type="match status" value="1"/>
</dbReference>
<dbReference type="SUPFAM" id="SSF88697">
    <property type="entry name" value="PUA domain-like"/>
    <property type="match status" value="1"/>
</dbReference>
<dbReference type="PROSITE" id="PS00902">
    <property type="entry name" value="GLUTAMATE_5_KINASE"/>
    <property type="match status" value="1"/>
</dbReference>
<dbReference type="PROSITE" id="PS50890">
    <property type="entry name" value="PUA"/>
    <property type="match status" value="1"/>
</dbReference>
<organism>
    <name type="scientific">Escherichia coli O127:H6 (strain E2348/69 / EPEC)</name>
    <dbReference type="NCBI Taxonomy" id="574521"/>
    <lineage>
        <taxon>Bacteria</taxon>
        <taxon>Pseudomonadati</taxon>
        <taxon>Pseudomonadota</taxon>
        <taxon>Gammaproteobacteria</taxon>
        <taxon>Enterobacterales</taxon>
        <taxon>Enterobacteriaceae</taxon>
        <taxon>Escherichia</taxon>
    </lineage>
</organism>
<reference key="1">
    <citation type="journal article" date="2009" name="J. Bacteriol.">
        <title>Complete genome sequence and comparative genome analysis of enteropathogenic Escherichia coli O127:H6 strain E2348/69.</title>
        <authorList>
            <person name="Iguchi A."/>
            <person name="Thomson N.R."/>
            <person name="Ogura Y."/>
            <person name="Saunders D."/>
            <person name="Ooka T."/>
            <person name="Henderson I.R."/>
            <person name="Harris D."/>
            <person name="Asadulghani M."/>
            <person name="Kurokawa K."/>
            <person name="Dean P."/>
            <person name="Kenny B."/>
            <person name="Quail M.A."/>
            <person name="Thurston S."/>
            <person name="Dougan G."/>
            <person name="Hayashi T."/>
            <person name="Parkhill J."/>
            <person name="Frankel G."/>
        </authorList>
    </citation>
    <scope>NUCLEOTIDE SEQUENCE [LARGE SCALE GENOMIC DNA]</scope>
    <source>
        <strain>E2348/69 / EPEC</strain>
    </source>
</reference>
<accession>B7UJD0</accession>
<name>PROB_ECO27</name>
<gene>
    <name evidence="1" type="primary">proB</name>
    <name type="ordered locus">E2348C_0235</name>
</gene>
<feature type="chain" id="PRO_1000193694" description="Glutamate 5-kinase">
    <location>
        <begin position="1"/>
        <end position="367"/>
    </location>
</feature>
<feature type="domain" description="PUA" evidence="1">
    <location>
        <begin position="275"/>
        <end position="353"/>
    </location>
</feature>
<feature type="binding site" evidence="1">
    <location>
        <position position="10"/>
    </location>
    <ligand>
        <name>ATP</name>
        <dbReference type="ChEBI" id="CHEBI:30616"/>
    </ligand>
</feature>
<feature type="binding site" evidence="1">
    <location>
        <position position="50"/>
    </location>
    <ligand>
        <name>substrate</name>
    </ligand>
</feature>
<feature type="binding site" evidence="1">
    <location>
        <position position="137"/>
    </location>
    <ligand>
        <name>substrate</name>
    </ligand>
</feature>
<feature type="binding site" evidence="1">
    <location>
        <position position="149"/>
    </location>
    <ligand>
        <name>substrate</name>
    </ligand>
</feature>
<feature type="binding site" evidence="1">
    <location>
        <begin position="169"/>
        <end position="170"/>
    </location>
    <ligand>
        <name>ATP</name>
        <dbReference type="ChEBI" id="CHEBI:30616"/>
    </ligand>
</feature>
<feature type="binding site" evidence="1">
    <location>
        <begin position="211"/>
        <end position="217"/>
    </location>
    <ligand>
        <name>ATP</name>
        <dbReference type="ChEBI" id="CHEBI:30616"/>
    </ligand>
</feature>
<protein>
    <recommendedName>
        <fullName evidence="1">Glutamate 5-kinase</fullName>
        <ecNumber evidence="1">2.7.2.11</ecNumber>
    </recommendedName>
    <alternativeName>
        <fullName evidence="1">Gamma-glutamyl kinase</fullName>
        <shortName evidence="1">GK</shortName>
    </alternativeName>
</protein>